<organism>
    <name type="scientific">Prochlorococcus marinus (strain MIT 9515)</name>
    <dbReference type="NCBI Taxonomy" id="167542"/>
    <lineage>
        <taxon>Bacteria</taxon>
        <taxon>Bacillati</taxon>
        <taxon>Cyanobacteriota</taxon>
        <taxon>Cyanophyceae</taxon>
        <taxon>Synechococcales</taxon>
        <taxon>Prochlorococcaceae</taxon>
        <taxon>Prochlorococcus</taxon>
    </lineage>
</organism>
<reference key="1">
    <citation type="journal article" date="2007" name="PLoS Genet.">
        <title>Patterns and implications of gene gain and loss in the evolution of Prochlorococcus.</title>
        <authorList>
            <person name="Kettler G.C."/>
            <person name="Martiny A.C."/>
            <person name="Huang K."/>
            <person name="Zucker J."/>
            <person name="Coleman M.L."/>
            <person name="Rodrigue S."/>
            <person name="Chen F."/>
            <person name="Lapidus A."/>
            <person name="Ferriera S."/>
            <person name="Johnson J."/>
            <person name="Steglich C."/>
            <person name="Church G.M."/>
            <person name="Richardson P."/>
            <person name="Chisholm S.W."/>
        </authorList>
    </citation>
    <scope>NUCLEOTIDE SEQUENCE [LARGE SCALE GENOMIC DNA]</scope>
    <source>
        <strain>MIT 9515</strain>
    </source>
</reference>
<keyword id="KW-0687">Ribonucleoprotein</keyword>
<keyword id="KW-0689">Ribosomal protein</keyword>
<keyword id="KW-0694">RNA-binding</keyword>
<keyword id="KW-0699">rRNA-binding</keyword>
<keyword id="KW-0820">tRNA-binding</keyword>
<comment type="function">
    <text evidence="1">Binds 23S rRNA and is also seen to make contacts with the A and possibly P site tRNAs.</text>
</comment>
<comment type="subunit">
    <text evidence="1">Part of the 50S ribosomal subunit.</text>
</comment>
<comment type="similarity">
    <text evidence="1">Belongs to the universal ribosomal protein uL16 family.</text>
</comment>
<protein>
    <recommendedName>
        <fullName evidence="1">Large ribosomal subunit protein uL16</fullName>
    </recommendedName>
    <alternativeName>
        <fullName evidence="2">50S ribosomal protein L16</fullName>
    </alternativeName>
</protein>
<evidence type="ECO:0000255" key="1">
    <source>
        <dbReference type="HAMAP-Rule" id="MF_01342"/>
    </source>
</evidence>
<evidence type="ECO:0000305" key="2"/>
<accession>A2BYS9</accession>
<gene>
    <name evidence="1" type="primary">rplP</name>
    <name evidence="1" type="synonym">rpl16</name>
    <name type="ordered locus">P9515_17331</name>
</gene>
<sequence>MLSPKRTKFRKQHRGRMKGIASKGNTIAFGQFALQAQDCGWVTARQIEASRRAMTRYVKRGGKIWIRIFPDKPVTMRPAETRMGSGKGNPEFWVAVVKPGRILFEMGGEEITEEIAKEAMRLAQYKLPVKTKFISSDKIVGGDSPVEKAIEKESTEEVKK</sequence>
<feature type="chain" id="PRO_1000054677" description="Large ribosomal subunit protein uL16">
    <location>
        <begin position="1"/>
        <end position="160"/>
    </location>
</feature>
<dbReference type="EMBL" id="CP000552">
    <property type="protein sequence ID" value="ABM72940.1"/>
    <property type="molecule type" value="Genomic_DNA"/>
</dbReference>
<dbReference type="RefSeq" id="WP_011821030.1">
    <property type="nucleotide sequence ID" value="NC_008817.1"/>
</dbReference>
<dbReference type="SMR" id="A2BYS9"/>
<dbReference type="STRING" id="167542.P9515_17331"/>
<dbReference type="GeneID" id="60200549"/>
<dbReference type="KEGG" id="pmc:P9515_17331"/>
<dbReference type="eggNOG" id="COG0197">
    <property type="taxonomic scope" value="Bacteria"/>
</dbReference>
<dbReference type="HOGENOM" id="CLU_078858_2_1_3"/>
<dbReference type="OrthoDB" id="9802589at2"/>
<dbReference type="Proteomes" id="UP000001589">
    <property type="component" value="Chromosome"/>
</dbReference>
<dbReference type="GO" id="GO:1990904">
    <property type="term" value="C:ribonucleoprotein complex"/>
    <property type="evidence" value="ECO:0007669"/>
    <property type="project" value="UniProtKB-KW"/>
</dbReference>
<dbReference type="GO" id="GO:0005840">
    <property type="term" value="C:ribosome"/>
    <property type="evidence" value="ECO:0007669"/>
    <property type="project" value="UniProtKB-KW"/>
</dbReference>
<dbReference type="GO" id="GO:0019843">
    <property type="term" value="F:rRNA binding"/>
    <property type="evidence" value="ECO:0007669"/>
    <property type="project" value="UniProtKB-UniRule"/>
</dbReference>
<dbReference type="GO" id="GO:0003735">
    <property type="term" value="F:structural constituent of ribosome"/>
    <property type="evidence" value="ECO:0007669"/>
    <property type="project" value="InterPro"/>
</dbReference>
<dbReference type="GO" id="GO:0000049">
    <property type="term" value="F:tRNA binding"/>
    <property type="evidence" value="ECO:0007669"/>
    <property type="project" value="UniProtKB-KW"/>
</dbReference>
<dbReference type="GO" id="GO:0006412">
    <property type="term" value="P:translation"/>
    <property type="evidence" value="ECO:0007669"/>
    <property type="project" value="UniProtKB-UniRule"/>
</dbReference>
<dbReference type="CDD" id="cd01433">
    <property type="entry name" value="Ribosomal_L16_L10e"/>
    <property type="match status" value="1"/>
</dbReference>
<dbReference type="FunFam" id="3.90.1170.10:FF:000001">
    <property type="entry name" value="50S ribosomal protein L16"/>
    <property type="match status" value="1"/>
</dbReference>
<dbReference type="Gene3D" id="3.90.1170.10">
    <property type="entry name" value="Ribosomal protein L10e/L16"/>
    <property type="match status" value="1"/>
</dbReference>
<dbReference type="HAMAP" id="MF_01342">
    <property type="entry name" value="Ribosomal_uL16"/>
    <property type="match status" value="1"/>
</dbReference>
<dbReference type="InterPro" id="IPR047873">
    <property type="entry name" value="Ribosomal_uL16"/>
</dbReference>
<dbReference type="InterPro" id="IPR000114">
    <property type="entry name" value="Ribosomal_uL16_bact-type"/>
</dbReference>
<dbReference type="InterPro" id="IPR020798">
    <property type="entry name" value="Ribosomal_uL16_CS"/>
</dbReference>
<dbReference type="InterPro" id="IPR016180">
    <property type="entry name" value="Ribosomal_uL16_dom"/>
</dbReference>
<dbReference type="InterPro" id="IPR036920">
    <property type="entry name" value="Ribosomal_uL16_sf"/>
</dbReference>
<dbReference type="NCBIfam" id="TIGR01164">
    <property type="entry name" value="rplP_bact"/>
    <property type="match status" value="1"/>
</dbReference>
<dbReference type="PANTHER" id="PTHR12220">
    <property type="entry name" value="50S/60S RIBOSOMAL PROTEIN L16"/>
    <property type="match status" value="1"/>
</dbReference>
<dbReference type="PANTHER" id="PTHR12220:SF13">
    <property type="entry name" value="LARGE RIBOSOMAL SUBUNIT PROTEIN UL16M"/>
    <property type="match status" value="1"/>
</dbReference>
<dbReference type="Pfam" id="PF00252">
    <property type="entry name" value="Ribosomal_L16"/>
    <property type="match status" value="1"/>
</dbReference>
<dbReference type="PRINTS" id="PR00060">
    <property type="entry name" value="RIBOSOMALL16"/>
</dbReference>
<dbReference type="SUPFAM" id="SSF54686">
    <property type="entry name" value="Ribosomal protein L16p/L10e"/>
    <property type="match status" value="1"/>
</dbReference>
<dbReference type="PROSITE" id="PS00586">
    <property type="entry name" value="RIBOSOMAL_L16_1"/>
    <property type="match status" value="1"/>
</dbReference>
<dbReference type="PROSITE" id="PS00701">
    <property type="entry name" value="RIBOSOMAL_L16_2"/>
    <property type="match status" value="1"/>
</dbReference>
<proteinExistence type="inferred from homology"/>
<name>RL16_PROM5</name>